<organism>
    <name type="scientific">Mus musculus</name>
    <name type="common">Mouse</name>
    <dbReference type="NCBI Taxonomy" id="10090"/>
    <lineage>
        <taxon>Eukaryota</taxon>
        <taxon>Metazoa</taxon>
        <taxon>Chordata</taxon>
        <taxon>Craniata</taxon>
        <taxon>Vertebrata</taxon>
        <taxon>Euteleostomi</taxon>
        <taxon>Mammalia</taxon>
        <taxon>Eutheria</taxon>
        <taxon>Euarchontoglires</taxon>
        <taxon>Glires</taxon>
        <taxon>Rodentia</taxon>
        <taxon>Myomorpha</taxon>
        <taxon>Muroidea</taxon>
        <taxon>Muridae</taxon>
        <taxon>Murinae</taxon>
        <taxon>Mus</taxon>
        <taxon>Mus</taxon>
    </lineage>
</organism>
<dbReference type="EC" id="1.11.1.9" evidence="2"/>
<dbReference type="EC" id="1.11.1.12" evidence="2"/>
<dbReference type="EMBL" id="U62658">
    <property type="protein sequence ID" value="AAD41533.1"/>
    <property type="molecule type" value="Genomic_DNA"/>
</dbReference>
<dbReference type="EMBL" id="AK131940">
    <property type="protein sequence ID" value="BAE20886.1"/>
    <property type="molecule type" value="mRNA"/>
</dbReference>
<dbReference type="EMBL" id="BC010823">
    <property type="protein sequence ID" value="AAH10823.1"/>
    <property type="molecule type" value="mRNA"/>
</dbReference>
<dbReference type="EMBL" id="BC034335">
    <property type="protein sequence ID" value="AAH34335.1"/>
    <property type="molecule type" value="mRNA"/>
</dbReference>
<dbReference type="EMBL" id="BC039658">
    <property type="protein sequence ID" value="AAH39658.1"/>
    <property type="molecule type" value="mRNA"/>
</dbReference>
<dbReference type="EMBL" id="BC054848">
    <property type="protein sequence ID" value="AAH54848.2"/>
    <property type="molecule type" value="mRNA"/>
</dbReference>
<dbReference type="CCDS" id="CCDS25996.1"/>
<dbReference type="RefSeq" id="NP_109602.2">
    <property type="nucleotide sequence ID" value="NM_030677.2"/>
</dbReference>
<dbReference type="FunCoup" id="Q9JHC0">
    <property type="interactions" value="320"/>
</dbReference>
<dbReference type="STRING" id="10090.ENSMUSP00000081012"/>
<dbReference type="PeroxiBase" id="3710">
    <property type="entry name" value="MmGPx02"/>
</dbReference>
<dbReference type="iPTMnet" id="Q9JHC0"/>
<dbReference type="PhosphoSitePlus" id="Q9JHC0"/>
<dbReference type="jPOST" id="Q9JHC0"/>
<dbReference type="PaxDb" id="10090-ENSMUSP00000081012"/>
<dbReference type="PeptideAtlas" id="Q9JHC0"/>
<dbReference type="ProteomicsDB" id="271051"/>
<dbReference type="DNASU" id="14776"/>
<dbReference type="GeneID" id="14776"/>
<dbReference type="KEGG" id="mmu:14776"/>
<dbReference type="UCSC" id="uc007nys.1">
    <property type="organism name" value="mouse"/>
</dbReference>
<dbReference type="AGR" id="MGI:106609"/>
<dbReference type="CTD" id="2877"/>
<dbReference type="MGI" id="MGI:106609">
    <property type="gene designation" value="Gpx2"/>
</dbReference>
<dbReference type="eggNOG" id="KOG1651">
    <property type="taxonomic scope" value="Eukaryota"/>
</dbReference>
<dbReference type="InParanoid" id="Q9JHC0"/>
<dbReference type="OrthoDB" id="1979at9989"/>
<dbReference type="PhylomeDB" id="Q9JHC0"/>
<dbReference type="TreeFam" id="TF105318"/>
<dbReference type="Reactome" id="R-MMU-2142712">
    <property type="pathway name" value="Synthesis of 12-eicosatetraenoic acid derivatives"/>
</dbReference>
<dbReference type="Reactome" id="R-MMU-2142770">
    <property type="pathway name" value="Synthesis of 15-eicosatetraenoic acid derivatives"/>
</dbReference>
<dbReference type="Reactome" id="R-MMU-3299685">
    <property type="pathway name" value="Detoxification of Reactive Oxygen Species"/>
</dbReference>
<dbReference type="Reactome" id="R-MMU-5628897">
    <property type="pathway name" value="TP53 Regulates Metabolic Genes"/>
</dbReference>
<dbReference type="BioGRID-ORCS" id="14776">
    <property type="hits" value="2 hits in 81 CRISPR screens"/>
</dbReference>
<dbReference type="ChiTaRS" id="Gpx2">
    <property type="organism name" value="mouse"/>
</dbReference>
<dbReference type="PRO" id="PR:Q9JHC0"/>
<dbReference type="Proteomes" id="UP000000589">
    <property type="component" value="Unplaced"/>
</dbReference>
<dbReference type="RNAct" id="Q9JHC0">
    <property type="molecule type" value="protein"/>
</dbReference>
<dbReference type="GO" id="GO:0005829">
    <property type="term" value="C:cytosol"/>
    <property type="evidence" value="ECO:0000304"/>
    <property type="project" value="MGI"/>
</dbReference>
<dbReference type="GO" id="GO:0004602">
    <property type="term" value="F:glutathione peroxidase activity"/>
    <property type="evidence" value="ECO:0000315"/>
    <property type="project" value="MGI"/>
</dbReference>
<dbReference type="GO" id="GO:0047066">
    <property type="term" value="F:phospholipid-hydroperoxide glutathione peroxidase activity"/>
    <property type="evidence" value="ECO:0007669"/>
    <property type="project" value="RHEA"/>
</dbReference>
<dbReference type="GO" id="GO:0051702">
    <property type="term" value="P:biological process involved in interaction with symbiont"/>
    <property type="evidence" value="ECO:0000316"/>
    <property type="project" value="MGI"/>
</dbReference>
<dbReference type="GO" id="GO:0002862">
    <property type="term" value="P:negative regulation of inflammatory response to antigenic stimulus"/>
    <property type="evidence" value="ECO:0000316"/>
    <property type="project" value="MGI"/>
</dbReference>
<dbReference type="GO" id="GO:0006979">
    <property type="term" value="P:response to oxidative stress"/>
    <property type="evidence" value="ECO:0007669"/>
    <property type="project" value="InterPro"/>
</dbReference>
<dbReference type="GO" id="GO:0009609">
    <property type="term" value="P:response to symbiotic bacterium"/>
    <property type="evidence" value="ECO:0000316"/>
    <property type="project" value="MGI"/>
</dbReference>
<dbReference type="GO" id="GO:0001659">
    <property type="term" value="P:temperature homeostasis"/>
    <property type="evidence" value="ECO:0000316"/>
    <property type="project" value="MGI"/>
</dbReference>
<dbReference type="CDD" id="cd00340">
    <property type="entry name" value="GSH_Peroxidase"/>
    <property type="match status" value="1"/>
</dbReference>
<dbReference type="FunFam" id="3.40.30.10:FF:000153">
    <property type="entry name" value="Glutathione peroxidase"/>
    <property type="match status" value="1"/>
</dbReference>
<dbReference type="Gene3D" id="3.40.30.10">
    <property type="entry name" value="Glutaredoxin"/>
    <property type="match status" value="1"/>
</dbReference>
<dbReference type="InterPro" id="IPR000889">
    <property type="entry name" value="Glutathione_peroxidase"/>
</dbReference>
<dbReference type="InterPro" id="IPR029759">
    <property type="entry name" value="GPX_AS"/>
</dbReference>
<dbReference type="InterPro" id="IPR029760">
    <property type="entry name" value="GPX_CS"/>
</dbReference>
<dbReference type="InterPro" id="IPR036249">
    <property type="entry name" value="Thioredoxin-like_sf"/>
</dbReference>
<dbReference type="PANTHER" id="PTHR11592">
    <property type="entry name" value="GLUTATHIONE PEROXIDASE"/>
    <property type="match status" value="1"/>
</dbReference>
<dbReference type="PANTHER" id="PTHR11592:SF36">
    <property type="entry name" value="GLUTATHIONE PEROXIDASE 2"/>
    <property type="match status" value="1"/>
</dbReference>
<dbReference type="Pfam" id="PF00255">
    <property type="entry name" value="GSHPx"/>
    <property type="match status" value="1"/>
</dbReference>
<dbReference type="PIRSF" id="PIRSF000303">
    <property type="entry name" value="Glutathion_perox"/>
    <property type="match status" value="1"/>
</dbReference>
<dbReference type="PRINTS" id="PR01011">
    <property type="entry name" value="GLUTPROXDASE"/>
</dbReference>
<dbReference type="SUPFAM" id="SSF52833">
    <property type="entry name" value="Thioredoxin-like"/>
    <property type="match status" value="1"/>
</dbReference>
<dbReference type="PROSITE" id="PS00460">
    <property type="entry name" value="GLUTATHIONE_PEROXID_1"/>
    <property type="match status" value="1"/>
</dbReference>
<dbReference type="PROSITE" id="PS00763">
    <property type="entry name" value="GLUTATHIONE_PEROXID_2"/>
    <property type="match status" value="1"/>
</dbReference>
<dbReference type="PROSITE" id="PS51355">
    <property type="entry name" value="GLUTATHIONE_PEROXID_3"/>
    <property type="match status" value="1"/>
</dbReference>
<name>GPX2_MOUSE</name>
<feature type="chain" id="PRO_0000066622" description="Glutathione peroxidase 2">
    <location>
        <begin position="1"/>
        <end position="190"/>
    </location>
</feature>
<feature type="active site" evidence="1">
    <location>
        <position position="40"/>
    </location>
</feature>
<feature type="non-standard amino acid" description="Selenocysteine" evidence="1">
    <location>
        <position position="40"/>
    </location>
</feature>
<feature type="sequence conflict" description="In Ref. 2; BAE20886." evidence="3" ref="2">
    <original>I</original>
    <variation>V</variation>
    <location>
        <position position="14"/>
    </location>
</feature>
<keyword id="KW-0963">Cytoplasm</keyword>
<keyword id="KW-0560">Oxidoreductase</keyword>
<keyword id="KW-0575">Peroxidase</keyword>
<keyword id="KW-1185">Reference proteome</keyword>
<keyword id="KW-0712">Selenocysteine</keyword>
<protein>
    <recommendedName>
        <fullName>Glutathione peroxidase 2</fullName>
        <shortName>GPx-2</shortName>
        <shortName>GSHPx-2</shortName>
        <ecNumber evidence="2">1.11.1.9</ecNumber>
    </recommendedName>
    <alternativeName>
        <fullName>Glutathione peroxidase-gastrointestinal</fullName>
        <shortName>GPx-GI</shortName>
        <shortName>GSHPx-GI</shortName>
    </alternativeName>
    <alternativeName>
        <fullName>Phospholipid hydroperoxide glutathione peroxidase GPX2</fullName>
        <ecNumber evidence="2">1.11.1.12</ecNumber>
    </alternativeName>
</protein>
<proteinExistence type="evidence at transcript level"/>
<evidence type="ECO:0000250" key="1">
    <source>
        <dbReference type="UniProtKB" id="O70325"/>
    </source>
</evidence>
<evidence type="ECO:0000250" key="2">
    <source>
        <dbReference type="UniProtKB" id="P18283"/>
    </source>
</evidence>
<evidence type="ECO:0000305" key="3"/>
<comment type="function">
    <text evidence="2">Catalyzes the reduction of hydroperoxides in a glutathione-dependent manner thus regulating cellular redox homeostasis. Can reduce small soluble hydroperoxides such as H2O2, cumene hydroperoxide and tert-butyl hydroperoxide, as well as several fatty acid-derived hydroperoxides. Cannot reduce phosphatidycholine hydroperoxide.</text>
</comment>
<comment type="catalytic activity">
    <reaction evidence="2">
        <text>2 glutathione + H2O2 = glutathione disulfide + 2 H2O</text>
        <dbReference type="Rhea" id="RHEA:16833"/>
        <dbReference type="ChEBI" id="CHEBI:15377"/>
        <dbReference type="ChEBI" id="CHEBI:16240"/>
        <dbReference type="ChEBI" id="CHEBI:57925"/>
        <dbReference type="ChEBI" id="CHEBI:58297"/>
        <dbReference type="EC" id="1.11.1.9"/>
    </reaction>
    <physiologicalReaction direction="left-to-right" evidence="2">
        <dbReference type="Rhea" id="RHEA:16834"/>
    </physiologicalReaction>
</comment>
<comment type="catalytic activity">
    <reaction evidence="2">
        <text>a hydroperoxy polyunsaturated fatty acid + 2 glutathione = a hydroxy polyunsaturated fatty acid + glutathione disulfide + H2O</text>
        <dbReference type="Rhea" id="RHEA:19057"/>
        <dbReference type="ChEBI" id="CHEBI:15377"/>
        <dbReference type="ChEBI" id="CHEBI:57925"/>
        <dbReference type="ChEBI" id="CHEBI:58297"/>
        <dbReference type="ChEBI" id="CHEBI:131871"/>
        <dbReference type="ChEBI" id="CHEBI:134019"/>
        <dbReference type="EC" id="1.11.1.12"/>
    </reaction>
    <physiologicalReaction direction="left-to-right" evidence="2">
        <dbReference type="Rhea" id="RHEA:19058"/>
    </physiologicalReaction>
</comment>
<comment type="catalytic activity">
    <reaction evidence="2">
        <text>tert-butyl hydroperoxide + 2 glutathione = tert-butanol + glutathione disulfide + H2O</text>
        <dbReference type="Rhea" id="RHEA:69412"/>
        <dbReference type="ChEBI" id="CHEBI:15377"/>
        <dbReference type="ChEBI" id="CHEBI:45895"/>
        <dbReference type="ChEBI" id="CHEBI:57925"/>
        <dbReference type="ChEBI" id="CHEBI:58297"/>
        <dbReference type="ChEBI" id="CHEBI:64090"/>
    </reaction>
    <physiologicalReaction direction="left-to-right" evidence="2">
        <dbReference type="Rhea" id="RHEA:69413"/>
    </physiologicalReaction>
</comment>
<comment type="catalytic activity">
    <reaction evidence="2">
        <text>cumene hydroperoxide + 2 glutathione = 2-phenylpropan-2-ol + glutathione disulfide + H2O</text>
        <dbReference type="Rhea" id="RHEA:69651"/>
        <dbReference type="ChEBI" id="CHEBI:15377"/>
        <dbReference type="ChEBI" id="CHEBI:57925"/>
        <dbReference type="ChEBI" id="CHEBI:58297"/>
        <dbReference type="ChEBI" id="CHEBI:78673"/>
        <dbReference type="ChEBI" id="CHEBI:131607"/>
    </reaction>
    <physiologicalReaction direction="left-to-right" evidence="2">
        <dbReference type="Rhea" id="RHEA:69652"/>
    </physiologicalReaction>
</comment>
<comment type="catalytic activity">
    <reaction evidence="2">
        <text>(13S)-hydroperoxy-(9Z,11E)-octadecadienoate + 2 glutathione = (13S)-hydroxy-(9Z,11E)-octadecadienoate + glutathione disulfide + H2O</text>
        <dbReference type="Rhea" id="RHEA:48888"/>
        <dbReference type="ChEBI" id="CHEBI:15377"/>
        <dbReference type="ChEBI" id="CHEBI:57466"/>
        <dbReference type="ChEBI" id="CHEBI:57925"/>
        <dbReference type="ChEBI" id="CHEBI:58297"/>
        <dbReference type="ChEBI" id="CHEBI:90850"/>
    </reaction>
    <physiologicalReaction direction="left-to-right" evidence="2">
        <dbReference type="Rhea" id="RHEA:48889"/>
    </physiologicalReaction>
</comment>
<comment type="catalytic activity">
    <reaction evidence="2">
        <text>(5S)-hydroperoxy-(6E,8Z,11Z,14Z)-eicosatetraenoate + 2 glutathione = (5S)-hydroxy-(6E,8Z,11Z,14Z)-eicosatetraenoate + glutathione disulfide + H2O</text>
        <dbReference type="Rhea" id="RHEA:48620"/>
        <dbReference type="ChEBI" id="CHEBI:15377"/>
        <dbReference type="ChEBI" id="CHEBI:57450"/>
        <dbReference type="ChEBI" id="CHEBI:57925"/>
        <dbReference type="ChEBI" id="CHEBI:58297"/>
        <dbReference type="ChEBI" id="CHEBI:90632"/>
    </reaction>
    <physiologicalReaction direction="left-to-right" evidence="2">
        <dbReference type="Rhea" id="RHEA:48621"/>
    </physiologicalReaction>
</comment>
<comment type="catalytic activity">
    <reaction evidence="2">
        <text>(12R)-hydroperoxy-(5Z,8Z,10E,14Z)-eicosatetraenoate + 2 glutathione = (12R)-hydroxy-(5Z,8Z,10E,14Z)-eicosatetraenoate + glutathione disulfide + H2O</text>
        <dbReference type="Rhea" id="RHEA:76691"/>
        <dbReference type="ChEBI" id="CHEBI:15377"/>
        <dbReference type="ChEBI" id="CHEBI:57925"/>
        <dbReference type="ChEBI" id="CHEBI:58297"/>
        <dbReference type="ChEBI" id="CHEBI:75230"/>
        <dbReference type="ChEBI" id="CHEBI:83343"/>
    </reaction>
    <physiologicalReaction direction="left-to-right" evidence="2">
        <dbReference type="Rhea" id="RHEA:76692"/>
    </physiologicalReaction>
</comment>
<comment type="catalytic activity">
    <reaction evidence="2">
        <text>(15S)-hydroperoxy-(5Z,8Z,11Z,13E)-eicosatetraenoate + 2 glutathione = (15S)-hydroxy-(5Z,8Z,11Z,13E)-eicosatetraenoate + glutathione disulfide + H2O</text>
        <dbReference type="Rhea" id="RHEA:76695"/>
        <dbReference type="ChEBI" id="CHEBI:15377"/>
        <dbReference type="ChEBI" id="CHEBI:57409"/>
        <dbReference type="ChEBI" id="CHEBI:57446"/>
        <dbReference type="ChEBI" id="CHEBI:57925"/>
        <dbReference type="ChEBI" id="CHEBI:58297"/>
    </reaction>
    <physiologicalReaction direction="left-to-right" evidence="2">
        <dbReference type="Rhea" id="RHEA:76696"/>
    </physiologicalReaction>
</comment>
<comment type="subunit">
    <text evidence="2">Homotetramer.</text>
</comment>
<comment type="subcellular location">
    <subcellularLocation>
        <location evidence="2">Cytoplasm</location>
        <location evidence="2">Cytosol</location>
    </subcellularLocation>
</comment>
<comment type="similarity">
    <text evidence="3">Belongs to the glutathione peroxidase family.</text>
</comment>
<accession>Q9JHC0</accession>
<accession>Q3V2B2</accession>
<sequence>MAYIAKSFYDLSAIGLDGEKIDFNTFRGRAVLIENVASLUGTTTRDYNQLNELQCRFPRRLVVLGFPCNQFGHQENCQNEEILNSLKYVRPGGGYQPTFSLTQKCDVNGQNEHPVFAYLKDKLPYPYDDPFSLMTDPKLIIWSPVRRSDVSWNFEKFLIGPEGEPFRRYSRSFQTINIEPDIKRLLKVAI</sequence>
<reference key="1">
    <citation type="journal article" date="1996" name="Genomics">
        <title>The mouse glutathione peroxidase Gpx2 gene maps to chromosome 12; its pseudogene Gpx2-ps maps to chromosome 7.</title>
        <authorList>
            <person name="Chu F.-F."/>
            <person name="Esworthy R.S."/>
            <person name="Burmeister M."/>
        </authorList>
    </citation>
    <scope>NUCLEOTIDE SEQUENCE [GENOMIC DNA]</scope>
    <source>
        <strain>129</strain>
    </source>
</reference>
<reference key="2">
    <citation type="journal article" date="2005" name="Science">
        <title>The transcriptional landscape of the mammalian genome.</title>
        <authorList>
            <person name="Carninci P."/>
            <person name="Kasukawa T."/>
            <person name="Katayama S."/>
            <person name="Gough J."/>
            <person name="Frith M.C."/>
            <person name="Maeda N."/>
            <person name="Oyama R."/>
            <person name="Ravasi T."/>
            <person name="Lenhard B."/>
            <person name="Wells C."/>
            <person name="Kodzius R."/>
            <person name="Shimokawa K."/>
            <person name="Bajic V.B."/>
            <person name="Brenner S.E."/>
            <person name="Batalov S."/>
            <person name="Forrest A.R."/>
            <person name="Zavolan M."/>
            <person name="Davis M.J."/>
            <person name="Wilming L.G."/>
            <person name="Aidinis V."/>
            <person name="Allen J.E."/>
            <person name="Ambesi-Impiombato A."/>
            <person name="Apweiler R."/>
            <person name="Aturaliya R.N."/>
            <person name="Bailey T.L."/>
            <person name="Bansal M."/>
            <person name="Baxter L."/>
            <person name="Beisel K.W."/>
            <person name="Bersano T."/>
            <person name="Bono H."/>
            <person name="Chalk A.M."/>
            <person name="Chiu K.P."/>
            <person name="Choudhary V."/>
            <person name="Christoffels A."/>
            <person name="Clutterbuck D.R."/>
            <person name="Crowe M.L."/>
            <person name="Dalla E."/>
            <person name="Dalrymple B.P."/>
            <person name="de Bono B."/>
            <person name="Della Gatta G."/>
            <person name="di Bernardo D."/>
            <person name="Down T."/>
            <person name="Engstrom P."/>
            <person name="Fagiolini M."/>
            <person name="Faulkner G."/>
            <person name="Fletcher C.F."/>
            <person name="Fukushima T."/>
            <person name="Furuno M."/>
            <person name="Futaki S."/>
            <person name="Gariboldi M."/>
            <person name="Georgii-Hemming P."/>
            <person name="Gingeras T.R."/>
            <person name="Gojobori T."/>
            <person name="Green R.E."/>
            <person name="Gustincich S."/>
            <person name="Harbers M."/>
            <person name="Hayashi Y."/>
            <person name="Hensch T.K."/>
            <person name="Hirokawa N."/>
            <person name="Hill D."/>
            <person name="Huminiecki L."/>
            <person name="Iacono M."/>
            <person name="Ikeo K."/>
            <person name="Iwama A."/>
            <person name="Ishikawa T."/>
            <person name="Jakt M."/>
            <person name="Kanapin A."/>
            <person name="Katoh M."/>
            <person name="Kawasawa Y."/>
            <person name="Kelso J."/>
            <person name="Kitamura H."/>
            <person name="Kitano H."/>
            <person name="Kollias G."/>
            <person name="Krishnan S.P."/>
            <person name="Kruger A."/>
            <person name="Kummerfeld S.K."/>
            <person name="Kurochkin I.V."/>
            <person name="Lareau L.F."/>
            <person name="Lazarevic D."/>
            <person name="Lipovich L."/>
            <person name="Liu J."/>
            <person name="Liuni S."/>
            <person name="McWilliam S."/>
            <person name="Madan Babu M."/>
            <person name="Madera M."/>
            <person name="Marchionni L."/>
            <person name="Matsuda H."/>
            <person name="Matsuzawa S."/>
            <person name="Miki H."/>
            <person name="Mignone F."/>
            <person name="Miyake S."/>
            <person name="Morris K."/>
            <person name="Mottagui-Tabar S."/>
            <person name="Mulder N."/>
            <person name="Nakano N."/>
            <person name="Nakauchi H."/>
            <person name="Ng P."/>
            <person name="Nilsson R."/>
            <person name="Nishiguchi S."/>
            <person name="Nishikawa S."/>
            <person name="Nori F."/>
            <person name="Ohara O."/>
            <person name="Okazaki Y."/>
            <person name="Orlando V."/>
            <person name="Pang K.C."/>
            <person name="Pavan W.J."/>
            <person name="Pavesi G."/>
            <person name="Pesole G."/>
            <person name="Petrovsky N."/>
            <person name="Piazza S."/>
            <person name="Reed J."/>
            <person name="Reid J.F."/>
            <person name="Ring B.Z."/>
            <person name="Ringwald M."/>
            <person name="Rost B."/>
            <person name="Ruan Y."/>
            <person name="Salzberg S.L."/>
            <person name="Sandelin A."/>
            <person name="Schneider C."/>
            <person name="Schoenbach C."/>
            <person name="Sekiguchi K."/>
            <person name="Semple C.A."/>
            <person name="Seno S."/>
            <person name="Sessa L."/>
            <person name="Sheng Y."/>
            <person name="Shibata Y."/>
            <person name="Shimada H."/>
            <person name="Shimada K."/>
            <person name="Silva D."/>
            <person name="Sinclair B."/>
            <person name="Sperling S."/>
            <person name="Stupka E."/>
            <person name="Sugiura K."/>
            <person name="Sultana R."/>
            <person name="Takenaka Y."/>
            <person name="Taki K."/>
            <person name="Tammoja K."/>
            <person name="Tan S.L."/>
            <person name="Tang S."/>
            <person name="Taylor M.S."/>
            <person name="Tegner J."/>
            <person name="Teichmann S.A."/>
            <person name="Ueda H.R."/>
            <person name="van Nimwegen E."/>
            <person name="Verardo R."/>
            <person name="Wei C.L."/>
            <person name="Yagi K."/>
            <person name="Yamanishi H."/>
            <person name="Zabarovsky E."/>
            <person name="Zhu S."/>
            <person name="Zimmer A."/>
            <person name="Hide W."/>
            <person name="Bult C."/>
            <person name="Grimmond S.M."/>
            <person name="Teasdale R.D."/>
            <person name="Liu E.T."/>
            <person name="Brusic V."/>
            <person name="Quackenbush J."/>
            <person name="Wahlestedt C."/>
            <person name="Mattick J.S."/>
            <person name="Hume D.A."/>
            <person name="Kai C."/>
            <person name="Sasaki D."/>
            <person name="Tomaru Y."/>
            <person name="Fukuda S."/>
            <person name="Kanamori-Katayama M."/>
            <person name="Suzuki M."/>
            <person name="Aoki J."/>
            <person name="Arakawa T."/>
            <person name="Iida J."/>
            <person name="Imamura K."/>
            <person name="Itoh M."/>
            <person name="Kato T."/>
            <person name="Kawaji H."/>
            <person name="Kawagashira N."/>
            <person name="Kawashima T."/>
            <person name="Kojima M."/>
            <person name="Kondo S."/>
            <person name="Konno H."/>
            <person name="Nakano K."/>
            <person name="Ninomiya N."/>
            <person name="Nishio T."/>
            <person name="Okada M."/>
            <person name="Plessy C."/>
            <person name="Shibata K."/>
            <person name="Shiraki T."/>
            <person name="Suzuki S."/>
            <person name="Tagami M."/>
            <person name="Waki K."/>
            <person name="Watahiki A."/>
            <person name="Okamura-Oho Y."/>
            <person name="Suzuki H."/>
            <person name="Kawai J."/>
            <person name="Hayashizaki Y."/>
        </authorList>
    </citation>
    <scope>NUCLEOTIDE SEQUENCE [LARGE SCALE MRNA]</scope>
    <source>
        <strain>C57BL/6J</strain>
    </source>
</reference>
<reference key="3">
    <citation type="journal article" date="2004" name="Genome Res.">
        <title>The status, quality, and expansion of the NIH full-length cDNA project: the Mammalian Gene Collection (MGC).</title>
        <authorList>
            <consortium name="The MGC Project Team"/>
        </authorList>
    </citation>
    <scope>NUCLEOTIDE SEQUENCE [LARGE SCALE MRNA]</scope>
    <source>
        <strain>FVB/N</strain>
        <tissue>Colon</tissue>
    </source>
</reference>
<gene>
    <name type="primary">Gpx2</name>
</gene>